<name>MTPN_DANRE</name>
<organism>
    <name type="scientific">Danio rerio</name>
    <name type="common">Zebrafish</name>
    <name type="synonym">Brachydanio rerio</name>
    <dbReference type="NCBI Taxonomy" id="7955"/>
    <lineage>
        <taxon>Eukaryota</taxon>
        <taxon>Metazoa</taxon>
        <taxon>Chordata</taxon>
        <taxon>Craniata</taxon>
        <taxon>Vertebrata</taxon>
        <taxon>Euteleostomi</taxon>
        <taxon>Actinopterygii</taxon>
        <taxon>Neopterygii</taxon>
        <taxon>Teleostei</taxon>
        <taxon>Ostariophysi</taxon>
        <taxon>Cypriniformes</taxon>
        <taxon>Danionidae</taxon>
        <taxon>Danioninae</taxon>
        <taxon>Danio</taxon>
    </lineage>
</organism>
<gene>
    <name type="primary">mtpn</name>
</gene>
<evidence type="ECO:0000250" key="1"/>
<evidence type="ECO:0000305" key="2"/>
<protein>
    <recommendedName>
        <fullName>Myotrophin</fullName>
    </recommendedName>
</protein>
<accession>Q7T2B9</accession>
<proteinExistence type="inferred from homology"/>
<reference key="1">
    <citation type="submission" date="2007-11" db="EMBL/GenBank/DDBJ databases">
        <authorList>
            <consortium name="NIH - Zebrafish Gene Collection (ZGC) project"/>
        </authorList>
    </citation>
    <scope>NUCLEOTIDE SEQUENCE [LARGE SCALE MRNA]</scope>
    <source>
        <tissue>Eye</tissue>
        <tissue>Kidney</tissue>
    </source>
</reference>
<dbReference type="EMBL" id="BC054609">
    <property type="protein sequence ID" value="AAH54609.1"/>
    <property type="molecule type" value="mRNA"/>
</dbReference>
<dbReference type="EMBL" id="BC154009">
    <property type="protein sequence ID" value="AAI54010.1"/>
    <property type="molecule type" value="mRNA"/>
</dbReference>
<dbReference type="EMBL" id="BC155200">
    <property type="protein sequence ID" value="AAI55201.1"/>
    <property type="molecule type" value="mRNA"/>
</dbReference>
<dbReference type="RefSeq" id="NP_998137.1">
    <property type="nucleotide sequence ID" value="NM_212972.2"/>
</dbReference>
<dbReference type="SMR" id="Q7T2B9"/>
<dbReference type="FunCoup" id="Q7T2B9">
    <property type="interactions" value="229"/>
</dbReference>
<dbReference type="STRING" id="7955.ENSDARP00000141690"/>
<dbReference type="PaxDb" id="7955-ENSDARP00000072408"/>
<dbReference type="Ensembl" id="ENSDART00000172320">
    <property type="protein sequence ID" value="ENSDARP00000141690"/>
    <property type="gene ID" value="ENSDARG00000104018"/>
</dbReference>
<dbReference type="GeneID" id="406240"/>
<dbReference type="KEGG" id="dre:406240"/>
<dbReference type="AGR" id="ZFIN:ZDB-GENE-040426-2166"/>
<dbReference type="CTD" id="136319"/>
<dbReference type="ZFIN" id="ZDB-GENE-040426-2166">
    <property type="gene designation" value="mtpn"/>
</dbReference>
<dbReference type="eggNOG" id="KOG4214">
    <property type="taxonomic scope" value="Eukaryota"/>
</dbReference>
<dbReference type="HOGENOM" id="CLU_000134_45_7_1"/>
<dbReference type="InParanoid" id="Q7T2B9"/>
<dbReference type="OMA" id="TALIDCT"/>
<dbReference type="OrthoDB" id="194358at2759"/>
<dbReference type="PhylomeDB" id="Q7T2B9"/>
<dbReference type="TreeFam" id="TF327387"/>
<dbReference type="Reactome" id="R-DRE-8951664">
    <property type="pathway name" value="Neddylation"/>
</dbReference>
<dbReference type="Reactome" id="R-DRE-983168">
    <property type="pathway name" value="Antigen processing: Ubiquitination &amp; Proteasome degradation"/>
</dbReference>
<dbReference type="PRO" id="PR:Q7T2B9"/>
<dbReference type="Proteomes" id="UP000000437">
    <property type="component" value="Chromosome 4"/>
</dbReference>
<dbReference type="Bgee" id="ENSDARG00000104018">
    <property type="expression patterns" value="Expressed in pharyngeal gill and 27 other cell types or tissues"/>
</dbReference>
<dbReference type="GO" id="GO:0005737">
    <property type="term" value="C:cytoplasm"/>
    <property type="evidence" value="ECO:0000318"/>
    <property type="project" value="GO_Central"/>
</dbReference>
<dbReference type="GO" id="GO:0005634">
    <property type="term" value="C:nucleus"/>
    <property type="evidence" value="ECO:0000318"/>
    <property type="project" value="GO_Central"/>
</dbReference>
<dbReference type="GO" id="GO:0048471">
    <property type="term" value="C:perinuclear region of cytoplasm"/>
    <property type="evidence" value="ECO:0007669"/>
    <property type="project" value="UniProtKB-SubCell"/>
</dbReference>
<dbReference type="GO" id="GO:2000812">
    <property type="term" value="P:regulation of barbed-end actin filament capping"/>
    <property type="evidence" value="ECO:0000318"/>
    <property type="project" value="GO_Central"/>
</dbReference>
<dbReference type="FunFam" id="1.25.40.20:FF:000118">
    <property type="entry name" value="Myotrophin"/>
    <property type="match status" value="1"/>
</dbReference>
<dbReference type="Gene3D" id="1.25.40.20">
    <property type="entry name" value="Ankyrin repeat-containing domain"/>
    <property type="match status" value="1"/>
</dbReference>
<dbReference type="InterPro" id="IPR002110">
    <property type="entry name" value="Ankyrin_rpt"/>
</dbReference>
<dbReference type="InterPro" id="IPR036770">
    <property type="entry name" value="Ankyrin_rpt-contain_sf"/>
</dbReference>
<dbReference type="PANTHER" id="PTHR24171">
    <property type="entry name" value="ANKYRIN REPEAT DOMAIN-CONTAINING PROTEIN 39-RELATED"/>
    <property type="match status" value="1"/>
</dbReference>
<dbReference type="PANTHER" id="PTHR24171:SF8">
    <property type="entry name" value="BRCA1-ASSOCIATED RING DOMAIN PROTEIN 1"/>
    <property type="match status" value="1"/>
</dbReference>
<dbReference type="Pfam" id="PF12796">
    <property type="entry name" value="Ank_2"/>
    <property type="match status" value="1"/>
</dbReference>
<dbReference type="PRINTS" id="PR01415">
    <property type="entry name" value="ANKYRIN"/>
</dbReference>
<dbReference type="SMART" id="SM00248">
    <property type="entry name" value="ANK"/>
    <property type="match status" value="3"/>
</dbReference>
<dbReference type="SUPFAM" id="SSF48403">
    <property type="entry name" value="Ankyrin repeat"/>
    <property type="match status" value="1"/>
</dbReference>
<dbReference type="PROSITE" id="PS50297">
    <property type="entry name" value="ANK_REP_REGION"/>
    <property type="match status" value="1"/>
</dbReference>
<dbReference type="PROSITE" id="PS50088">
    <property type="entry name" value="ANK_REPEAT"/>
    <property type="match status" value="2"/>
</dbReference>
<feature type="chain" id="PRO_0000330661" description="Myotrophin">
    <location>
        <begin position="1"/>
        <end position="118"/>
    </location>
</feature>
<feature type="repeat" description="ANK 1">
    <location>
        <begin position="1"/>
        <end position="30"/>
    </location>
</feature>
<feature type="repeat" description="ANK 2">
    <location>
        <begin position="34"/>
        <end position="65"/>
    </location>
</feature>
<feature type="repeat" description="ANK 3">
    <location>
        <begin position="67"/>
        <end position="98"/>
    </location>
</feature>
<comment type="function">
    <text evidence="1">Regulates NF-kappa-B transcription factor activity. Promotes growth of cardiomyocytes, but not cardiomyocyte proliferation. Promotes cardiac muscle hypertrophy. Plays a role in the regulation of the growth of actin filaments. Inhibits the activity of the F-actin-capping protein complex (By similarity).</text>
</comment>
<comment type="subcellular location">
    <subcellularLocation>
        <location evidence="1">Cytoplasm</location>
    </subcellularLocation>
    <subcellularLocation>
        <location evidence="1">Nucleus</location>
    </subcellularLocation>
    <subcellularLocation>
        <location evidence="1">Cytoplasm</location>
        <location evidence="1">Perinuclear region</location>
    </subcellularLocation>
</comment>
<comment type="similarity">
    <text evidence="2">Belongs to the myotrophin family.</text>
</comment>
<sequence>MGDKELMWALKNGDLDEVKNILVKAEDVNRTLEGGRKPLHYAADCGQAEMLEFLLSKGADVNAPDKHGITPLLSATYEGHVTCVKILLEKGADKNRKGPDGLSAFEAAESEAIKALLE</sequence>
<keyword id="KW-0040">ANK repeat</keyword>
<keyword id="KW-0963">Cytoplasm</keyword>
<keyword id="KW-0539">Nucleus</keyword>
<keyword id="KW-1185">Reference proteome</keyword>
<keyword id="KW-0677">Repeat</keyword>